<proteinExistence type="inferred from homology"/>
<feature type="chain" id="PRO_0000066093" description="DNA binding protein ORF8">
    <location>
        <begin position="1"/>
        <end position="36"/>
    </location>
</feature>
<gene>
    <name type="ORF">ORF8</name>
</gene>
<dbReference type="EMBL" id="D00624">
    <property type="protein sequence ID" value="BAA00510.1"/>
    <property type="molecule type" value="Genomic_DNA"/>
</dbReference>
<dbReference type="SMR" id="P19188"/>
<dbReference type="KEGG" id="vg:1261212"/>
<dbReference type="Proteomes" id="UP000002125">
    <property type="component" value="Genome"/>
</dbReference>
<dbReference type="GO" id="GO:0030430">
    <property type="term" value="C:host cell cytoplasm"/>
    <property type="evidence" value="ECO:0007669"/>
    <property type="project" value="UniProtKB-SubCell"/>
</dbReference>
<dbReference type="GO" id="GO:0019028">
    <property type="term" value="C:viral capsid"/>
    <property type="evidence" value="ECO:0007669"/>
    <property type="project" value="UniProtKB-KW"/>
</dbReference>
<dbReference type="GO" id="GO:0003677">
    <property type="term" value="F:DNA binding"/>
    <property type="evidence" value="ECO:0007669"/>
    <property type="project" value="UniProtKB-KW"/>
</dbReference>
<accession>P19188</accession>
<comment type="function">
    <text evidence="1">Mediates ssDNA packaging into virion, it locates to the internal surface of the capsid. Additionally, plays a role in viral attachment to the host cell (By similarity).</text>
</comment>
<comment type="subcellular location">
    <subcellularLocation>
        <location>Virion</location>
    </subcellularLocation>
    <subcellularLocation>
        <location evidence="1">Host cytoplasm</location>
    </subcellularLocation>
</comment>
<comment type="similarity">
    <text evidence="2">Belongs to the microviridae J protein family.</text>
</comment>
<evidence type="ECO:0000250" key="1"/>
<evidence type="ECO:0000305" key="2"/>
<protein>
    <recommendedName>
        <fullName>DNA binding protein ORF8</fullName>
    </recommendedName>
</protein>
<name>J_BPCHP</name>
<reference key="1">
    <citation type="journal article" date="1989" name="J. Gen. Virol.">
        <title>Analysis of the complete nucleotide sequence of Chp1, a phage which infects avian Chlamydia psittaci.</title>
        <authorList>
            <person name="Storey C.C."/>
            <person name="Lusher M."/>
            <person name="Richmond S.J."/>
        </authorList>
    </citation>
    <scope>NUCLEOTIDE SEQUENCE [GENOMIC DNA]</scope>
</reference>
<organism>
    <name type="scientific">Chlamydia phage 1</name>
    <name type="common">Bacteriophage Chp1</name>
    <dbReference type="NCBI Taxonomy" id="2003327"/>
    <lineage>
        <taxon>Viruses</taxon>
        <taxon>Monodnaviria</taxon>
        <taxon>Sangervirae</taxon>
        <taxon>Phixviricota</taxon>
        <taxon>Malgrandaviricetes</taxon>
        <taxon>Petitvirales</taxon>
        <taxon>Microviridae</taxon>
        <taxon>Gokushovirinae</taxon>
        <taxon>Chlamydiamicrovirus</taxon>
    </lineage>
</organism>
<organismHost>
    <name type="scientific">Chlamydia psittaci</name>
    <name type="common">Chlamydophila psittaci</name>
    <dbReference type="NCBI Taxonomy" id="83554"/>
</organismHost>
<keyword id="KW-0167">Capsid protein</keyword>
<keyword id="KW-0238">DNA-binding</keyword>
<keyword id="KW-1035">Host cytoplasm</keyword>
<keyword id="KW-1185">Reference proteome</keyword>
<keyword id="KW-0946">Virion</keyword>
<sequence length="36" mass="4670">MVRRRRLRRRISRRIFRRTVARVGRRRRSFRGGIRF</sequence>